<keyword id="KW-0963">Cytoplasm</keyword>
<keyword id="KW-0448">Lipopolysaccharide biosynthesis</keyword>
<keyword id="KW-1185">Reference proteome</keyword>
<keyword id="KW-0808">Transferase</keyword>
<accession>Q8EAR9</accession>
<dbReference type="EC" id="2.5.1.55" evidence="1"/>
<dbReference type="EMBL" id="AE014299">
    <property type="protein sequence ID" value="AAN56804.1"/>
    <property type="molecule type" value="Genomic_DNA"/>
</dbReference>
<dbReference type="RefSeq" id="NP_719360.1">
    <property type="nucleotide sequence ID" value="NC_004347.2"/>
</dbReference>
<dbReference type="RefSeq" id="WP_011073591.1">
    <property type="nucleotide sequence ID" value="NC_004347.2"/>
</dbReference>
<dbReference type="SMR" id="Q8EAR9"/>
<dbReference type="STRING" id="211586.SO_3827"/>
<dbReference type="PaxDb" id="211586-SO_3827"/>
<dbReference type="KEGG" id="son:SO_3827"/>
<dbReference type="PATRIC" id="fig|211586.12.peg.3715"/>
<dbReference type="eggNOG" id="COG2877">
    <property type="taxonomic scope" value="Bacteria"/>
</dbReference>
<dbReference type="HOGENOM" id="CLU_036666_0_0_6"/>
<dbReference type="OrthoDB" id="9776934at2"/>
<dbReference type="PhylomeDB" id="Q8EAR9"/>
<dbReference type="BioCyc" id="SONE211586:G1GMP-3552-MONOMER"/>
<dbReference type="UniPathway" id="UPA00030"/>
<dbReference type="UniPathway" id="UPA00357">
    <property type="reaction ID" value="UER00474"/>
</dbReference>
<dbReference type="Proteomes" id="UP000008186">
    <property type="component" value="Chromosome"/>
</dbReference>
<dbReference type="GO" id="GO:0005829">
    <property type="term" value="C:cytosol"/>
    <property type="evidence" value="ECO:0000318"/>
    <property type="project" value="GO_Central"/>
</dbReference>
<dbReference type="GO" id="GO:0008676">
    <property type="term" value="F:3-deoxy-8-phosphooctulonate synthase activity"/>
    <property type="evidence" value="ECO:0000318"/>
    <property type="project" value="GO_Central"/>
</dbReference>
<dbReference type="GO" id="GO:0019294">
    <property type="term" value="P:keto-3-deoxy-D-manno-octulosonic acid biosynthetic process"/>
    <property type="evidence" value="ECO:0000318"/>
    <property type="project" value="GO_Central"/>
</dbReference>
<dbReference type="Gene3D" id="3.20.20.70">
    <property type="entry name" value="Aldolase class I"/>
    <property type="match status" value="1"/>
</dbReference>
<dbReference type="HAMAP" id="MF_00056">
    <property type="entry name" value="KDO8P_synth"/>
    <property type="match status" value="1"/>
</dbReference>
<dbReference type="InterPro" id="IPR013785">
    <property type="entry name" value="Aldolase_TIM"/>
</dbReference>
<dbReference type="InterPro" id="IPR006218">
    <property type="entry name" value="DAHP1/KDSA"/>
</dbReference>
<dbReference type="InterPro" id="IPR006269">
    <property type="entry name" value="KDO8P_synthase"/>
</dbReference>
<dbReference type="NCBIfam" id="TIGR01362">
    <property type="entry name" value="KDO8P_synth"/>
    <property type="match status" value="1"/>
</dbReference>
<dbReference type="NCBIfam" id="NF003543">
    <property type="entry name" value="PRK05198.1"/>
    <property type="match status" value="1"/>
</dbReference>
<dbReference type="NCBIfam" id="NF009109">
    <property type="entry name" value="PRK12457.1"/>
    <property type="match status" value="1"/>
</dbReference>
<dbReference type="PANTHER" id="PTHR21057">
    <property type="entry name" value="PHOSPHO-2-DEHYDRO-3-DEOXYHEPTONATE ALDOLASE"/>
    <property type="match status" value="1"/>
</dbReference>
<dbReference type="Pfam" id="PF00793">
    <property type="entry name" value="DAHP_synth_1"/>
    <property type="match status" value="1"/>
</dbReference>
<dbReference type="SUPFAM" id="SSF51569">
    <property type="entry name" value="Aldolase"/>
    <property type="match status" value="1"/>
</dbReference>
<organism>
    <name type="scientific">Shewanella oneidensis (strain ATCC 700550 / JCM 31522 / CIP 106686 / LMG 19005 / NCIMB 14063 / MR-1)</name>
    <dbReference type="NCBI Taxonomy" id="211586"/>
    <lineage>
        <taxon>Bacteria</taxon>
        <taxon>Pseudomonadati</taxon>
        <taxon>Pseudomonadota</taxon>
        <taxon>Gammaproteobacteria</taxon>
        <taxon>Alteromonadales</taxon>
        <taxon>Shewanellaceae</taxon>
        <taxon>Shewanella</taxon>
    </lineage>
</organism>
<feature type="chain" id="PRO_0000187165" description="2-dehydro-3-deoxyphosphooctonate aldolase">
    <location>
        <begin position="1"/>
        <end position="282"/>
    </location>
</feature>
<sequence>MSNKIIKLGSIEIANDKPFVLFGGMNVLESRDLAMSIAETYAEVTQKLGIPYVFKASFDKANRSSVNSYRGPGMEEGLKIFEEIKKTFNLPLITDVHETYQCAPVAEVVDIIQLPAFLARQTDLVVAMAKTGAIINVKKPQFLAPHEMRHIITKFNEAGNDEIILCERGSCFGYNNLVVDMLGMDEMKQSGYPVIFDATHALQRPGGRADSAGGRRAQATELARSGMALGLAGLFIEAHPDPDNAKCDGPCALPLHQLENYLKQMKAIDDLVKSFEPIDTSK</sequence>
<evidence type="ECO:0000255" key="1">
    <source>
        <dbReference type="HAMAP-Rule" id="MF_00056"/>
    </source>
</evidence>
<gene>
    <name evidence="1" type="primary">kdsA</name>
    <name type="ordered locus">SO_3827</name>
</gene>
<proteinExistence type="inferred from homology"/>
<name>KDSA_SHEON</name>
<comment type="catalytic activity">
    <reaction evidence="1">
        <text>D-arabinose 5-phosphate + phosphoenolpyruvate + H2O = 3-deoxy-alpha-D-manno-2-octulosonate-8-phosphate + phosphate</text>
        <dbReference type="Rhea" id="RHEA:14053"/>
        <dbReference type="ChEBI" id="CHEBI:15377"/>
        <dbReference type="ChEBI" id="CHEBI:43474"/>
        <dbReference type="ChEBI" id="CHEBI:57693"/>
        <dbReference type="ChEBI" id="CHEBI:58702"/>
        <dbReference type="ChEBI" id="CHEBI:85985"/>
        <dbReference type="EC" id="2.5.1.55"/>
    </reaction>
</comment>
<comment type="pathway">
    <text evidence="1">Carbohydrate biosynthesis; 3-deoxy-D-manno-octulosonate biosynthesis; 3-deoxy-D-manno-octulosonate from D-ribulose 5-phosphate: step 2/3.</text>
</comment>
<comment type="pathway">
    <text evidence="1">Bacterial outer membrane biogenesis; lipopolysaccharide biosynthesis.</text>
</comment>
<comment type="subcellular location">
    <subcellularLocation>
        <location evidence="1">Cytoplasm</location>
    </subcellularLocation>
</comment>
<comment type="similarity">
    <text evidence="1">Belongs to the KdsA family.</text>
</comment>
<reference key="1">
    <citation type="journal article" date="2002" name="Nat. Biotechnol.">
        <title>Genome sequence of the dissimilatory metal ion-reducing bacterium Shewanella oneidensis.</title>
        <authorList>
            <person name="Heidelberg J.F."/>
            <person name="Paulsen I.T."/>
            <person name="Nelson K.E."/>
            <person name="Gaidos E.J."/>
            <person name="Nelson W.C."/>
            <person name="Read T.D."/>
            <person name="Eisen J.A."/>
            <person name="Seshadri R."/>
            <person name="Ward N.L."/>
            <person name="Methe B.A."/>
            <person name="Clayton R.A."/>
            <person name="Meyer T."/>
            <person name="Tsapin A."/>
            <person name="Scott J."/>
            <person name="Beanan M.J."/>
            <person name="Brinkac L.M."/>
            <person name="Daugherty S.C."/>
            <person name="DeBoy R.T."/>
            <person name="Dodson R.J."/>
            <person name="Durkin A.S."/>
            <person name="Haft D.H."/>
            <person name="Kolonay J.F."/>
            <person name="Madupu R."/>
            <person name="Peterson J.D."/>
            <person name="Umayam L.A."/>
            <person name="White O."/>
            <person name="Wolf A.M."/>
            <person name="Vamathevan J.J."/>
            <person name="Weidman J.F."/>
            <person name="Impraim M."/>
            <person name="Lee K."/>
            <person name="Berry K.J."/>
            <person name="Lee C."/>
            <person name="Mueller J."/>
            <person name="Khouri H.M."/>
            <person name="Gill J."/>
            <person name="Utterback T.R."/>
            <person name="McDonald L.A."/>
            <person name="Feldblyum T.V."/>
            <person name="Smith H.O."/>
            <person name="Venter J.C."/>
            <person name="Nealson K.H."/>
            <person name="Fraser C.M."/>
        </authorList>
    </citation>
    <scope>NUCLEOTIDE SEQUENCE [LARGE SCALE GENOMIC DNA]</scope>
    <source>
        <strain>ATCC 700550 / JCM 31522 / CIP 106686 / LMG 19005 / NCIMB 14063 / MR-1</strain>
    </source>
</reference>
<protein>
    <recommendedName>
        <fullName evidence="1">2-dehydro-3-deoxyphosphooctonate aldolase</fullName>
        <ecNumber evidence="1">2.5.1.55</ecNumber>
    </recommendedName>
    <alternativeName>
        <fullName evidence="1">3-deoxy-D-manno-octulosonic acid 8-phosphate synthase</fullName>
    </alternativeName>
    <alternativeName>
        <fullName evidence="1">KDO-8-phosphate synthase</fullName>
        <shortName evidence="1">KDO 8-P synthase</shortName>
        <shortName evidence="1">KDOPS</shortName>
    </alternativeName>
    <alternativeName>
        <fullName evidence="1">Phospho-2-dehydro-3-deoxyoctonate aldolase</fullName>
    </alternativeName>
</protein>